<protein>
    <recommendedName>
        <fullName>Vomeronasal type-1 receptor 46</fullName>
    </recommendedName>
    <alternativeName>
        <fullName>Vomeronasal type-1 receptor A13</fullName>
    </alternativeName>
    <alternativeName>
        <fullName>Vomeronasal type-1 receptor B8</fullName>
    </alternativeName>
</protein>
<accession>Q9EQ45</accession>
<sequence length="309" mass="35006">MNKANIFCTDTNMKVILFSEVSVGISANSILFISHLCMFLGESRPKPIDLYIAFFSLTHLMLLVTMGLIAVDMFMPGGRWDSTTCTFLMYLHIVLRGPTLCATCLLNVLWTITLSPRNSCLTKFKHKSPHHISGAFLFLCVLYMSLSSELLSITASLNLTSENFLYVSQSCSILPMSYSIKSMFSTKMAIREAFLIGLMVLSSGYMVALLWSHKKQAQHLHSNSLSLKASPEQRATRTIMLLMSFFVVFYILDSVIFYSRMKFKDDSIFVCVQIIVSHSYVTVSPFVFICTEKHIIKFFWSLCGRIVNI</sequence>
<feature type="chain" id="PRO_0000239980" description="Vomeronasal type-1 receptor 46">
    <location>
        <begin position="1"/>
        <end position="309"/>
    </location>
</feature>
<feature type="topological domain" description="Extracellular" evidence="1">
    <location>
        <begin position="1"/>
        <end position="20"/>
    </location>
</feature>
<feature type="transmembrane region" description="Helical; Name=1" evidence="1">
    <location>
        <begin position="21"/>
        <end position="41"/>
    </location>
</feature>
<feature type="topological domain" description="Cytoplasmic" evidence="1">
    <location>
        <begin position="42"/>
        <end position="50"/>
    </location>
</feature>
<feature type="transmembrane region" description="Helical; Name=2" evidence="1">
    <location>
        <begin position="51"/>
        <end position="71"/>
    </location>
</feature>
<feature type="topological domain" description="Extracellular" evidence="1">
    <location>
        <begin position="72"/>
        <end position="85"/>
    </location>
</feature>
<feature type="transmembrane region" description="Helical; Name=3" evidence="1">
    <location>
        <begin position="86"/>
        <end position="106"/>
    </location>
</feature>
<feature type="topological domain" description="Cytoplasmic" evidence="1">
    <location>
        <begin position="107"/>
        <end position="134"/>
    </location>
</feature>
<feature type="transmembrane region" description="Helical; Name=4" evidence="1">
    <location>
        <begin position="135"/>
        <end position="155"/>
    </location>
</feature>
<feature type="topological domain" description="Extracellular" evidence="1">
    <location>
        <begin position="156"/>
        <end position="192"/>
    </location>
</feature>
<feature type="transmembrane region" description="Helical; Name=5" evidence="1">
    <location>
        <begin position="193"/>
        <end position="213"/>
    </location>
</feature>
<feature type="topological domain" description="Cytoplasmic" evidence="1">
    <location>
        <begin position="214"/>
        <end position="237"/>
    </location>
</feature>
<feature type="transmembrane region" description="Helical; Name=6" evidence="1">
    <location>
        <begin position="238"/>
        <end position="258"/>
    </location>
</feature>
<feature type="topological domain" description="Extracellular" evidence="1">
    <location>
        <begin position="259"/>
        <end position="267"/>
    </location>
</feature>
<feature type="transmembrane region" description="Helical; Name=7" evidence="1">
    <location>
        <begin position="268"/>
        <end position="288"/>
    </location>
</feature>
<feature type="topological domain" description="Cytoplasmic" evidence="1">
    <location>
        <begin position="289"/>
        <end position="309"/>
    </location>
</feature>
<feature type="glycosylation site" description="N-linked (GlcNAc...) asparagine" evidence="1">
    <location>
        <position position="158"/>
    </location>
</feature>
<feature type="disulfide bond" evidence="2">
    <location>
        <begin position="85"/>
        <end position="171"/>
    </location>
</feature>
<comment type="function">
    <text evidence="3">Putative pheromone receptor implicated in the regulation of social and reproductive behavior.</text>
</comment>
<comment type="subcellular location">
    <subcellularLocation>
        <location evidence="4">Cell membrane</location>
        <topology evidence="1">Multi-pass membrane protein</topology>
    </subcellularLocation>
</comment>
<comment type="disruption phenotype">
    <text evidence="3">Mice lacking all but one V1ra and V1rb gene (12% of the V1r repertoire) show a lack of chemosensory response to a subset of known pheromonal ligands and changes in maternal aggression as well as male reproductive behavior.</text>
</comment>
<comment type="similarity">
    <text evidence="2">Belongs to the G-protein coupled receptor 1 family.</text>
</comment>
<reference evidence="5" key="1">
    <citation type="journal article" date="2000" name="Genome Res.">
        <title>Sequence diversity and genomic organization of vomeronasal receptor genes in the mouse.</title>
        <authorList>
            <person name="Del Punta K."/>
            <person name="Rothman A."/>
            <person name="Rodriguez I."/>
            <person name="Mombaerts P."/>
        </authorList>
    </citation>
    <scope>NUCLEOTIDE SEQUENCE [GENOMIC DNA]</scope>
    <source>
        <strain evidence="5">129/SvJ</strain>
    </source>
</reference>
<reference evidence="6" key="2">
    <citation type="submission" date="2001-06" db="EMBL/GenBank/DDBJ databases">
        <title>Vomeronasal receptor gene diversity in the mammalian genome.</title>
        <authorList>
            <person name="Sam M."/>
            <person name="Matsunami H."/>
            <person name="Buck L."/>
        </authorList>
    </citation>
    <scope>NUCLEOTIDE SEQUENCE [GENOMIC DNA]</scope>
</reference>
<reference evidence="4" key="3">
    <citation type="journal article" date="2002" name="Nature">
        <title>Deficient pheromone responses in mice lacking a cluster of vomeronasal receptor genes.</title>
        <authorList>
            <person name="Del Punta K."/>
            <person name="Leinders-Zufall T."/>
            <person name="Rodriguez I."/>
            <person name="Jukam D."/>
            <person name="Wysocki C.J."/>
            <person name="Ogawa S."/>
            <person name="Zufall F."/>
            <person name="Mombaerts P."/>
        </authorList>
    </citation>
    <scope>PUTATIVE FUNCTION</scope>
    <scope>DISRUPTION PHENOTYPE</scope>
</reference>
<proteinExistence type="inferred from homology"/>
<name>V1R46_MOUSE</name>
<keyword id="KW-1003">Cell membrane</keyword>
<keyword id="KW-1015">Disulfide bond</keyword>
<keyword id="KW-0297">G-protein coupled receptor</keyword>
<keyword id="KW-0325">Glycoprotein</keyword>
<keyword id="KW-0472">Membrane</keyword>
<keyword id="KW-0589">Pheromone response</keyword>
<keyword id="KW-0675">Receptor</keyword>
<keyword id="KW-1185">Reference proteome</keyword>
<keyword id="KW-0807">Transducer</keyword>
<keyword id="KW-0812">Transmembrane</keyword>
<keyword id="KW-1133">Transmembrane helix</keyword>
<dbReference type="EMBL" id="AF291494">
    <property type="protein sequence ID" value="AAG42088.1"/>
    <property type="molecule type" value="Genomic_DNA"/>
</dbReference>
<dbReference type="EMBL" id="AB062903">
    <property type="protein sequence ID" value="BAB79220.1"/>
    <property type="molecule type" value="Genomic_DNA"/>
</dbReference>
<dbReference type="CCDS" id="CCDS20348.1"/>
<dbReference type="RefSeq" id="NP_444459.1">
    <property type="nucleotide sequence ID" value="NM_053229.1"/>
</dbReference>
<dbReference type="RefSeq" id="XP_006505446.1">
    <property type="nucleotide sequence ID" value="XM_006505383.1"/>
</dbReference>
<dbReference type="SMR" id="Q9EQ45"/>
<dbReference type="STRING" id="10090.ENSMUSP00000154175"/>
<dbReference type="GlyCosmos" id="Q9EQ45">
    <property type="glycosylation" value="1 site, No reported glycans"/>
</dbReference>
<dbReference type="GlyGen" id="Q9EQ45">
    <property type="glycosylation" value="2 sites"/>
</dbReference>
<dbReference type="PaxDb" id="10090-ENSMUSP00000075197"/>
<dbReference type="DNASU" id="113856"/>
<dbReference type="Ensembl" id="ENSMUST00000075797.2">
    <property type="protein sequence ID" value="ENSMUSP00000075197.2"/>
    <property type="gene ID" value="ENSMUSG00000061653.5"/>
</dbReference>
<dbReference type="Ensembl" id="ENSMUST00000205088.3">
    <property type="protein sequence ID" value="ENSMUSP00000144888.2"/>
    <property type="gene ID" value="ENSMUSG00000061653.5"/>
</dbReference>
<dbReference type="Ensembl" id="ENSMUST00000226715.2">
    <property type="protein sequence ID" value="ENSMUSP00000154054.2"/>
    <property type="gene ID" value="ENSMUSG00000061653.5"/>
</dbReference>
<dbReference type="Ensembl" id="ENSMUST00000228401.2">
    <property type="protein sequence ID" value="ENSMUSP00000154175.2"/>
    <property type="gene ID" value="ENSMUSG00000061653.5"/>
</dbReference>
<dbReference type="GeneID" id="113856"/>
<dbReference type="KEGG" id="mmu:113856"/>
<dbReference type="UCSC" id="uc009cwq.1">
    <property type="organism name" value="mouse"/>
</dbReference>
<dbReference type="AGR" id="MGI:2148519"/>
<dbReference type="CTD" id="113856"/>
<dbReference type="MGI" id="MGI:2148519">
    <property type="gene designation" value="Vmn1r46"/>
</dbReference>
<dbReference type="VEuPathDB" id="HostDB:ENSMUSG00000061653"/>
<dbReference type="eggNOG" id="ENOG502SNRJ">
    <property type="taxonomic scope" value="Eukaryota"/>
</dbReference>
<dbReference type="GeneTree" id="ENSGT01030000234553"/>
<dbReference type="HOGENOM" id="CLU_058641_0_0_1"/>
<dbReference type="InParanoid" id="Q9EQ45"/>
<dbReference type="OMA" id="FSGMLCK"/>
<dbReference type="OrthoDB" id="9634176at2759"/>
<dbReference type="PhylomeDB" id="Q9EQ45"/>
<dbReference type="BioGRID-ORCS" id="113856">
    <property type="hits" value="1 hit in 73 CRISPR screens"/>
</dbReference>
<dbReference type="PRO" id="PR:Q9EQ45"/>
<dbReference type="Proteomes" id="UP000000589">
    <property type="component" value="Chromosome 6"/>
</dbReference>
<dbReference type="RNAct" id="Q9EQ45">
    <property type="molecule type" value="protein"/>
</dbReference>
<dbReference type="GO" id="GO:0005886">
    <property type="term" value="C:plasma membrane"/>
    <property type="evidence" value="ECO:0007669"/>
    <property type="project" value="UniProtKB-SubCell"/>
</dbReference>
<dbReference type="GO" id="GO:0016503">
    <property type="term" value="F:pheromone receptor activity"/>
    <property type="evidence" value="ECO:0007669"/>
    <property type="project" value="InterPro"/>
</dbReference>
<dbReference type="GO" id="GO:0019236">
    <property type="term" value="P:response to pheromone"/>
    <property type="evidence" value="ECO:0007669"/>
    <property type="project" value="UniProtKB-KW"/>
</dbReference>
<dbReference type="GO" id="GO:0007606">
    <property type="term" value="P:sensory perception of chemical stimulus"/>
    <property type="evidence" value="ECO:0000304"/>
    <property type="project" value="MGI"/>
</dbReference>
<dbReference type="CDD" id="cd13949">
    <property type="entry name" value="7tm_V1R_pheromone"/>
    <property type="match status" value="1"/>
</dbReference>
<dbReference type="FunFam" id="1.20.1070.10:FF:000051">
    <property type="entry name" value="Vomeronasal type-1 receptor"/>
    <property type="match status" value="1"/>
</dbReference>
<dbReference type="Gene3D" id="1.20.1070.10">
    <property type="entry name" value="Rhodopsin 7-helix transmembrane proteins"/>
    <property type="match status" value="1"/>
</dbReference>
<dbReference type="InterPro" id="IPR017452">
    <property type="entry name" value="GPCR_Rhodpsn_7TM"/>
</dbReference>
<dbReference type="InterPro" id="IPR004072">
    <property type="entry name" value="Vmron_rcpt_1"/>
</dbReference>
<dbReference type="PANTHER" id="PTHR24062">
    <property type="entry name" value="VOMERONASAL TYPE-1 RECEPTOR"/>
    <property type="match status" value="1"/>
</dbReference>
<dbReference type="Pfam" id="PF03402">
    <property type="entry name" value="V1R"/>
    <property type="match status" value="1"/>
</dbReference>
<dbReference type="PRINTS" id="PR01534">
    <property type="entry name" value="VOMERONASL1R"/>
</dbReference>
<dbReference type="SUPFAM" id="SSF81321">
    <property type="entry name" value="Family A G protein-coupled receptor-like"/>
    <property type="match status" value="1"/>
</dbReference>
<dbReference type="PROSITE" id="PS50262">
    <property type="entry name" value="G_PROTEIN_RECEP_F1_2"/>
    <property type="match status" value="1"/>
</dbReference>
<organism>
    <name type="scientific">Mus musculus</name>
    <name type="common">Mouse</name>
    <dbReference type="NCBI Taxonomy" id="10090"/>
    <lineage>
        <taxon>Eukaryota</taxon>
        <taxon>Metazoa</taxon>
        <taxon>Chordata</taxon>
        <taxon>Craniata</taxon>
        <taxon>Vertebrata</taxon>
        <taxon>Euteleostomi</taxon>
        <taxon>Mammalia</taxon>
        <taxon>Eutheria</taxon>
        <taxon>Euarchontoglires</taxon>
        <taxon>Glires</taxon>
        <taxon>Rodentia</taxon>
        <taxon>Myomorpha</taxon>
        <taxon>Muroidea</taxon>
        <taxon>Muridae</taxon>
        <taxon>Murinae</taxon>
        <taxon>Mus</taxon>
        <taxon>Mus</taxon>
    </lineage>
</organism>
<evidence type="ECO:0000255" key="1"/>
<evidence type="ECO:0000255" key="2">
    <source>
        <dbReference type="PROSITE-ProRule" id="PRU00521"/>
    </source>
</evidence>
<evidence type="ECO:0000269" key="3">
    <source>
    </source>
</evidence>
<evidence type="ECO:0000305" key="4"/>
<evidence type="ECO:0000312" key="5">
    <source>
        <dbReference type="EMBL" id="AAG42088.1"/>
    </source>
</evidence>
<evidence type="ECO:0000312" key="6">
    <source>
        <dbReference type="EMBL" id="BAB79220.1"/>
    </source>
</evidence>
<gene>
    <name type="primary">Vmn1r46</name>
    <name evidence="6" type="synonym">V1ra13</name>
    <name type="synonym">V1rb8</name>
</gene>